<dbReference type="EC" id="2.5.1.75" evidence="1"/>
<dbReference type="EMBL" id="CP000237">
    <property type="protein sequence ID" value="ABD45755.1"/>
    <property type="molecule type" value="Genomic_DNA"/>
</dbReference>
<dbReference type="RefSeq" id="WP_011451957.1">
    <property type="nucleotide sequence ID" value="NC_007798.1"/>
</dbReference>
<dbReference type="SMR" id="Q2GDJ5"/>
<dbReference type="STRING" id="222891.NSE_0570"/>
<dbReference type="KEGG" id="nse:NSE_0570"/>
<dbReference type="eggNOG" id="COG0324">
    <property type="taxonomic scope" value="Bacteria"/>
</dbReference>
<dbReference type="HOGENOM" id="CLU_032616_0_1_5"/>
<dbReference type="OrthoDB" id="9776390at2"/>
<dbReference type="Proteomes" id="UP000001942">
    <property type="component" value="Chromosome"/>
</dbReference>
<dbReference type="GO" id="GO:0005524">
    <property type="term" value="F:ATP binding"/>
    <property type="evidence" value="ECO:0007669"/>
    <property type="project" value="UniProtKB-UniRule"/>
</dbReference>
<dbReference type="GO" id="GO:0052381">
    <property type="term" value="F:tRNA dimethylallyltransferase activity"/>
    <property type="evidence" value="ECO:0007669"/>
    <property type="project" value="UniProtKB-UniRule"/>
</dbReference>
<dbReference type="GO" id="GO:0006400">
    <property type="term" value="P:tRNA modification"/>
    <property type="evidence" value="ECO:0007669"/>
    <property type="project" value="TreeGrafter"/>
</dbReference>
<dbReference type="Gene3D" id="3.40.50.300">
    <property type="entry name" value="P-loop containing nucleotide triphosphate hydrolases"/>
    <property type="match status" value="2"/>
</dbReference>
<dbReference type="HAMAP" id="MF_00185">
    <property type="entry name" value="IPP_trans"/>
    <property type="match status" value="1"/>
</dbReference>
<dbReference type="InterPro" id="IPR039657">
    <property type="entry name" value="Dimethylallyltransferase"/>
</dbReference>
<dbReference type="InterPro" id="IPR018022">
    <property type="entry name" value="IPT"/>
</dbReference>
<dbReference type="InterPro" id="IPR027417">
    <property type="entry name" value="P-loop_NTPase"/>
</dbReference>
<dbReference type="PANTHER" id="PTHR11088">
    <property type="entry name" value="TRNA DIMETHYLALLYLTRANSFERASE"/>
    <property type="match status" value="1"/>
</dbReference>
<dbReference type="PANTHER" id="PTHR11088:SF60">
    <property type="entry name" value="TRNA DIMETHYLALLYLTRANSFERASE"/>
    <property type="match status" value="1"/>
</dbReference>
<dbReference type="Pfam" id="PF01715">
    <property type="entry name" value="IPPT"/>
    <property type="match status" value="1"/>
</dbReference>
<dbReference type="SUPFAM" id="SSF52540">
    <property type="entry name" value="P-loop containing nucleoside triphosphate hydrolases"/>
    <property type="match status" value="1"/>
</dbReference>
<sequence length="305" mass="34370">MPNASRRVLVLTGPTSSGKTSVACAVSQVSDDLVIINADSKQVYRELPILTSQASCGMLYGYLSVFDEFIPSVASWMRDCADCLESVWAQKGIPLIVGGTPMYLYSLLHGINLLPSLPDCLMRELSEELDNLGPSGFLNRFVCKSGEDLSRFSCDSYKMLRDVAYFLYTGKTIQELYRESSVYKIPYDSIDVVAIIPSDRDSLYSKINERFLEAVNSGAIDEVASVVENKAAFRNRAVTTICGFREIASYLRDEITLERMVAMGQRSIRNYAKRQLTWFRNKFNGIKAFDQPQDAERYILREILL</sequence>
<gene>
    <name evidence="1" type="primary">miaA</name>
    <name type="ordered locus">NSE_0570</name>
</gene>
<proteinExistence type="inferred from homology"/>
<protein>
    <recommendedName>
        <fullName evidence="1">tRNA dimethylallyltransferase</fullName>
        <ecNumber evidence="1">2.5.1.75</ecNumber>
    </recommendedName>
    <alternativeName>
        <fullName evidence="1">Dimethylallyl diphosphate:tRNA dimethylallyltransferase</fullName>
        <shortName evidence="1">DMAPP:tRNA dimethylallyltransferase</shortName>
        <shortName evidence="1">DMATase</shortName>
    </alternativeName>
    <alternativeName>
        <fullName evidence="1">Isopentenyl-diphosphate:tRNA isopentenyltransferase</fullName>
        <shortName evidence="1">IPP transferase</shortName>
        <shortName evidence="1">IPPT</shortName>
        <shortName evidence="1">IPTase</shortName>
    </alternativeName>
</protein>
<organism>
    <name type="scientific">Neorickettsia sennetsu (strain ATCC VR-367 / Miyayama)</name>
    <name type="common">Ehrlichia sennetsu</name>
    <dbReference type="NCBI Taxonomy" id="222891"/>
    <lineage>
        <taxon>Bacteria</taxon>
        <taxon>Pseudomonadati</taxon>
        <taxon>Pseudomonadota</taxon>
        <taxon>Alphaproteobacteria</taxon>
        <taxon>Rickettsiales</taxon>
        <taxon>Anaplasmataceae</taxon>
        <taxon>Neorickettsia</taxon>
    </lineage>
</organism>
<feature type="chain" id="PRO_0000377240" description="tRNA dimethylallyltransferase">
    <location>
        <begin position="1"/>
        <end position="305"/>
    </location>
</feature>
<feature type="region of interest" description="Interaction with substrate tRNA" evidence="1">
    <location>
        <begin position="39"/>
        <end position="42"/>
    </location>
</feature>
<feature type="binding site" evidence="1">
    <location>
        <begin position="13"/>
        <end position="20"/>
    </location>
    <ligand>
        <name>ATP</name>
        <dbReference type="ChEBI" id="CHEBI:30616"/>
    </ligand>
</feature>
<feature type="binding site" evidence="1">
    <location>
        <begin position="15"/>
        <end position="20"/>
    </location>
    <ligand>
        <name>substrate</name>
    </ligand>
</feature>
<feature type="site" description="Interaction with substrate tRNA" evidence="1">
    <location>
        <position position="100"/>
    </location>
</feature>
<evidence type="ECO:0000255" key="1">
    <source>
        <dbReference type="HAMAP-Rule" id="MF_00185"/>
    </source>
</evidence>
<name>MIAA_NEOSM</name>
<comment type="function">
    <text evidence="1">Catalyzes the transfer of a dimethylallyl group onto the adenine at position 37 in tRNAs that read codons beginning with uridine, leading to the formation of N6-(dimethylallyl)adenosine (i(6)A).</text>
</comment>
<comment type="catalytic activity">
    <reaction evidence="1">
        <text>adenosine(37) in tRNA + dimethylallyl diphosphate = N(6)-dimethylallyladenosine(37) in tRNA + diphosphate</text>
        <dbReference type="Rhea" id="RHEA:26482"/>
        <dbReference type="Rhea" id="RHEA-COMP:10162"/>
        <dbReference type="Rhea" id="RHEA-COMP:10375"/>
        <dbReference type="ChEBI" id="CHEBI:33019"/>
        <dbReference type="ChEBI" id="CHEBI:57623"/>
        <dbReference type="ChEBI" id="CHEBI:74411"/>
        <dbReference type="ChEBI" id="CHEBI:74415"/>
        <dbReference type="EC" id="2.5.1.75"/>
    </reaction>
</comment>
<comment type="cofactor">
    <cofactor evidence="1">
        <name>Mg(2+)</name>
        <dbReference type="ChEBI" id="CHEBI:18420"/>
    </cofactor>
</comment>
<comment type="subunit">
    <text evidence="1">Monomer.</text>
</comment>
<comment type="similarity">
    <text evidence="1">Belongs to the IPP transferase family.</text>
</comment>
<keyword id="KW-0067">ATP-binding</keyword>
<keyword id="KW-0460">Magnesium</keyword>
<keyword id="KW-0547">Nucleotide-binding</keyword>
<keyword id="KW-0808">Transferase</keyword>
<keyword id="KW-0819">tRNA processing</keyword>
<accession>Q2GDJ5</accession>
<reference key="1">
    <citation type="journal article" date="2006" name="PLoS Genet.">
        <title>Comparative genomics of emerging human ehrlichiosis agents.</title>
        <authorList>
            <person name="Dunning Hotopp J.C."/>
            <person name="Lin M."/>
            <person name="Madupu R."/>
            <person name="Crabtree J."/>
            <person name="Angiuoli S.V."/>
            <person name="Eisen J.A."/>
            <person name="Seshadri R."/>
            <person name="Ren Q."/>
            <person name="Wu M."/>
            <person name="Utterback T.R."/>
            <person name="Smith S."/>
            <person name="Lewis M."/>
            <person name="Khouri H."/>
            <person name="Zhang C."/>
            <person name="Niu H."/>
            <person name="Lin Q."/>
            <person name="Ohashi N."/>
            <person name="Zhi N."/>
            <person name="Nelson W.C."/>
            <person name="Brinkac L.M."/>
            <person name="Dodson R.J."/>
            <person name="Rosovitz M.J."/>
            <person name="Sundaram J.P."/>
            <person name="Daugherty S.C."/>
            <person name="Davidsen T."/>
            <person name="Durkin A.S."/>
            <person name="Gwinn M.L."/>
            <person name="Haft D.H."/>
            <person name="Selengut J.D."/>
            <person name="Sullivan S.A."/>
            <person name="Zafar N."/>
            <person name="Zhou L."/>
            <person name="Benahmed F."/>
            <person name="Forberger H."/>
            <person name="Halpin R."/>
            <person name="Mulligan S."/>
            <person name="Robinson J."/>
            <person name="White O."/>
            <person name="Rikihisa Y."/>
            <person name="Tettelin H."/>
        </authorList>
    </citation>
    <scope>NUCLEOTIDE SEQUENCE [LARGE SCALE GENOMIC DNA]</scope>
    <source>
        <strain>ATCC VR-367 / Miyayama</strain>
    </source>
</reference>